<name>RS2_ECO45</name>
<dbReference type="EMBL" id="CU928161">
    <property type="protein sequence ID" value="CAR01544.1"/>
    <property type="molecule type" value="Genomic_DNA"/>
</dbReference>
<dbReference type="RefSeq" id="WP_000246882.1">
    <property type="nucleotide sequence ID" value="NC_011742.1"/>
</dbReference>
<dbReference type="EMDB" id="EMD-7014"/>
<dbReference type="EMDB" id="EMD-7015"/>
<dbReference type="EMDB" id="EMD-7016"/>
<dbReference type="EMDB" id="EMD-7970"/>
<dbReference type="EMDB" id="EMD-8621"/>
<dbReference type="EMDB" id="EMD-8826"/>
<dbReference type="EMDB" id="EMD-8829"/>
<dbReference type="SMR" id="B7MBF0"/>
<dbReference type="IntAct" id="B7MBF0">
    <property type="interactions" value="1"/>
</dbReference>
<dbReference type="GeneID" id="89519558"/>
<dbReference type="KEGG" id="ecz:ECS88_0179"/>
<dbReference type="HOGENOM" id="CLU_040318_1_2_6"/>
<dbReference type="Proteomes" id="UP000000747">
    <property type="component" value="Chromosome"/>
</dbReference>
<dbReference type="GO" id="GO:0022627">
    <property type="term" value="C:cytosolic small ribosomal subunit"/>
    <property type="evidence" value="ECO:0007669"/>
    <property type="project" value="TreeGrafter"/>
</dbReference>
<dbReference type="GO" id="GO:0003735">
    <property type="term" value="F:structural constituent of ribosome"/>
    <property type="evidence" value="ECO:0007669"/>
    <property type="project" value="InterPro"/>
</dbReference>
<dbReference type="GO" id="GO:0006412">
    <property type="term" value="P:translation"/>
    <property type="evidence" value="ECO:0007669"/>
    <property type="project" value="UniProtKB-UniRule"/>
</dbReference>
<dbReference type="CDD" id="cd01425">
    <property type="entry name" value="RPS2"/>
    <property type="match status" value="1"/>
</dbReference>
<dbReference type="FunFam" id="1.10.287.610:FF:000001">
    <property type="entry name" value="30S ribosomal protein S2"/>
    <property type="match status" value="1"/>
</dbReference>
<dbReference type="Gene3D" id="3.40.50.10490">
    <property type="entry name" value="Glucose-6-phosphate isomerase like protein, domain 1"/>
    <property type="match status" value="1"/>
</dbReference>
<dbReference type="Gene3D" id="1.10.287.610">
    <property type="entry name" value="Helix hairpin bin"/>
    <property type="match status" value="1"/>
</dbReference>
<dbReference type="HAMAP" id="MF_00291_B">
    <property type="entry name" value="Ribosomal_uS2_B"/>
    <property type="match status" value="1"/>
</dbReference>
<dbReference type="InterPro" id="IPR001865">
    <property type="entry name" value="Ribosomal_uS2"/>
</dbReference>
<dbReference type="InterPro" id="IPR005706">
    <property type="entry name" value="Ribosomal_uS2_bac/mit/plastid"/>
</dbReference>
<dbReference type="InterPro" id="IPR018130">
    <property type="entry name" value="Ribosomal_uS2_CS"/>
</dbReference>
<dbReference type="InterPro" id="IPR023591">
    <property type="entry name" value="Ribosomal_uS2_flav_dom_sf"/>
</dbReference>
<dbReference type="NCBIfam" id="TIGR01011">
    <property type="entry name" value="rpsB_bact"/>
    <property type="match status" value="1"/>
</dbReference>
<dbReference type="PANTHER" id="PTHR12534">
    <property type="entry name" value="30S RIBOSOMAL PROTEIN S2 PROKARYOTIC AND ORGANELLAR"/>
    <property type="match status" value="1"/>
</dbReference>
<dbReference type="PANTHER" id="PTHR12534:SF0">
    <property type="entry name" value="SMALL RIBOSOMAL SUBUNIT PROTEIN US2M"/>
    <property type="match status" value="1"/>
</dbReference>
<dbReference type="Pfam" id="PF00318">
    <property type="entry name" value="Ribosomal_S2"/>
    <property type="match status" value="1"/>
</dbReference>
<dbReference type="PRINTS" id="PR00395">
    <property type="entry name" value="RIBOSOMALS2"/>
</dbReference>
<dbReference type="SUPFAM" id="SSF52313">
    <property type="entry name" value="Ribosomal protein S2"/>
    <property type="match status" value="1"/>
</dbReference>
<dbReference type="PROSITE" id="PS00962">
    <property type="entry name" value="RIBOSOMAL_S2_1"/>
    <property type="match status" value="1"/>
</dbReference>
<dbReference type="PROSITE" id="PS00963">
    <property type="entry name" value="RIBOSOMAL_S2_2"/>
    <property type="match status" value="1"/>
</dbReference>
<organism>
    <name type="scientific">Escherichia coli O45:K1 (strain S88 / ExPEC)</name>
    <dbReference type="NCBI Taxonomy" id="585035"/>
    <lineage>
        <taxon>Bacteria</taxon>
        <taxon>Pseudomonadati</taxon>
        <taxon>Pseudomonadota</taxon>
        <taxon>Gammaproteobacteria</taxon>
        <taxon>Enterobacterales</taxon>
        <taxon>Enterobacteriaceae</taxon>
        <taxon>Escherichia</taxon>
    </lineage>
</organism>
<gene>
    <name evidence="1" type="primary">rpsB</name>
    <name type="ordered locus">ECS88_0179</name>
</gene>
<protein>
    <recommendedName>
        <fullName evidence="1">Small ribosomal subunit protein uS2</fullName>
    </recommendedName>
    <alternativeName>
        <fullName evidence="2">30S ribosomal protein S2</fullName>
    </alternativeName>
</protein>
<sequence length="241" mass="26744">MATVSMRDMLKAGVHFGHQTRYWNPKMKPFIFGARNKVHIINLEKTVPMFNEALAELNKIASRKGKILFVGTKRAASEAVKDAALSCDQFFVNHRWLGGMLTNWKTVRQSIKRLKDLETQSQDGTFDKLTKKEALMRTRELEKLENSLGGIKDMGGLPDALFVIDADHEHIAIKEANNLGIPVFAIVDTNSDPDGVDFVIPGNDDAIRAVTLYLGAVAATVREGRSQDLASQAEESFVEAE</sequence>
<reference key="1">
    <citation type="journal article" date="2009" name="PLoS Genet.">
        <title>Organised genome dynamics in the Escherichia coli species results in highly diverse adaptive paths.</title>
        <authorList>
            <person name="Touchon M."/>
            <person name="Hoede C."/>
            <person name="Tenaillon O."/>
            <person name="Barbe V."/>
            <person name="Baeriswyl S."/>
            <person name="Bidet P."/>
            <person name="Bingen E."/>
            <person name="Bonacorsi S."/>
            <person name="Bouchier C."/>
            <person name="Bouvet O."/>
            <person name="Calteau A."/>
            <person name="Chiapello H."/>
            <person name="Clermont O."/>
            <person name="Cruveiller S."/>
            <person name="Danchin A."/>
            <person name="Diard M."/>
            <person name="Dossat C."/>
            <person name="Karoui M.E."/>
            <person name="Frapy E."/>
            <person name="Garry L."/>
            <person name="Ghigo J.M."/>
            <person name="Gilles A.M."/>
            <person name="Johnson J."/>
            <person name="Le Bouguenec C."/>
            <person name="Lescat M."/>
            <person name="Mangenot S."/>
            <person name="Martinez-Jehanne V."/>
            <person name="Matic I."/>
            <person name="Nassif X."/>
            <person name="Oztas S."/>
            <person name="Petit M.A."/>
            <person name="Pichon C."/>
            <person name="Rouy Z."/>
            <person name="Ruf C.S."/>
            <person name="Schneider D."/>
            <person name="Tourret J."/>
            <person name="Vacherie B."/>
            <person name="Vallenet D."/>
            <person name="Medigue C."/>
            <person name="Rocha E.P.C."/>
            <person name="Denamur E."/>
        </authorList>
    </citation>
    <scope>NUCLEOTIDE SEQUENCE [LARGE SCALE GENOMIC DNA]</scope>
    <source>
        <strain>S88 / ExPEC</strain>
    </source>
</reference>
<comment type="similarity">
    <text evidence="1">Belongs to the universal ribosomal protein uS2 family.</text>
</comment>
<feature type="chain" id="PRO_1000119424" description="Small ribosomal subunit protein uS2">
    <location>
        <begin position="1"/>
        <end position="241"/>
    </location>
</feature>
<evidence type="ECO:0000255" key="1">
    <source>
        <dbReference type="HAMAP-Rule" id="MF_00291"/>
    </source>
</evidence>
<evidence type="ECO:0000305" key="2"/>
<accession>B7MBF0</accession>
<proteinExistence type="inferred from homology"/>
<keyword id="KW-1185">Reference proteome</keyword>
<keyword id="KW-0687">Ribonucleoprotein</keyword>
<keyword id="KW-0689">Ribosomal protein</keyword>